<protein>
    <recommendedName>
        <fullName evidence="5">Uridylate cyclase</fullName>
        <ecNumber evidence="4">4.6.1.26</ecNumber>
    </recommendedName>
    <alternativeName>
        <fullName>Cyclic UMP synthase</fullName>
        <shortName evidence="5">cUMP synthase</shortName>
    </alternativeName>
    <alternativeName>
        <fullName evidence="5">RsPycC</fullName>
    </alternativeName>
</protein>
<proteinExistence type="evidence at protein level"/>
<keyword id="KW-0051">Antiviral defense</keyword>
<keyword id="KW-0963">Cytoplasm</keyword>
<keyword id="KW-0456">Lyase</keyword>
<keyword id="KW-0464">Manganese</keyword>
<keyword id="KW-0479">Metal-binding</keyword>
<keyword id="KW-0547">Nucleotide-binding</keyword>
<keyword id="KW-0677">Repeat</keyword>
<comment type="function">
    <text evidence="8">Pycsar (pyrimidine cyclase system for antiphage resistance) provides immunity against bacteriophage. The pyrimidine cyclase (PycC) synthesizes cyclic nucleotides in response to infection; these serve as specific second messenger signals. The signals activate the nearby effector, leading to bacterial cell death and abortive phage infection. A clade A Pycsar system.</text>
</comment>
<comment type="function">
    <text evidence="4 8">The pyrimidine cyclase gene of a two-gene Pycsar system, generates cyclic UMP (cUMP) from UTP, has little to no activity on ATP, CTP or GTP (PubMed:34644530). Expression of this and effector RsPycTM (AC A0A4R2UGS4) probably confers resistance to some bacteriophage. The genes are probably only expressed in response to bacteriophage infection (Probable).</text>
</comment>
<comment type="catalytic activity">
    <reaction evidence="4">
        <text>UTP = 3',5'-cyclic UMP + diphosphate</text>
        <dbReference type="Rhea" id="RHEA:69603"/>
        <dbReference type="ChEBI" id="CHEBI:33019"/>
        <dbReference type="ChEBI" id="CHEBI:46398"/>
        <dbReference type="ChEBI" id="CHEBI:184387"/>
        <dbReference type="EC" id="4.6.1.26"/>
    </reaction>
</comment>
<comment type="cofactor">
    <cofactor evidence="1">
        <name>Mn(2+)</name>
        <dbReference type="ChEBI" id="CHEBI:29035"/>
    </cofactor>
</comment>
<comment type="subunit">
    <text evidence="2">Monomer.</text>
</comment>
<comment type="subcellular location">
    <subcellularLocation>
        <location evidence="7">Cytoplasm</location>
    </subcellularLocation>
</comment>
<comment type="domain">
    <text evidence="2">The 2 guanylate cyclase domains fold into a pseudo-dimeric structure.</text>
</comment>
<comment type="similarity">
    <text evidence="8">Belongs to the adenylyl cyclase class-4/guanylyl cyclase family. Pyrimidine cyclase subfamily.</text>
</comment>
<dbReference type="EC" id="4.6.1.26" evidence="4"/>
<dbReference type="EMBL" id="SLYE01000002">
    <property type="protein sequence ID" value="TCQ09630.1"/>
    <property type="molecule type" value="Genomic_DNA"/>
</dbReference>
<dbReference type="SMR" id="A0A4R2TZQ0"/>
<dbReference type="GO" id="GO:0005737">
    <property type="term" value="C:cytoplasm"/>
    <property type="evidence" value="ECO:0007669"/>
    <property type="project" value="UniProtKB-SubCell"/>
</dbReference>
<dbReference type="GO" id="GO:0004016">
    <property type="term" value="F:adenylate cyclase activity"/>
    <property type="evidence" value="ECO:0007669"/>
    <property type="project" value="UniProtKB-ARBA"/>
</dbReference>
<dbReference type="GO" id="GO:0046872">
    <property type="term" value="F:metal ion binding"/>
    <property type="evidence" value="ECO:0007669"/>
    <property type="project" value="UniProtKB-KW"/>
</dbReference>
<dbReference type="GO" id="GO:0000166">
    <property type="term" value="F:nucleotide binding"/>
    <property type="evidence" value="ECO:0007669"/>
    <property type="project" value="UniProtKB-KW"/>
</dbReference>
<dbReference type="GO" id="GO:0009190">
    <property type="term" value="P:cyclic nucleotide biosynthetic process"/>
    <property type="evidence" value="ECO:0007669"/>
    <property type="project" value="InterPro"/>
</dbReference>
<dbReference type="GO" id="GO:0051607">
    <property type="term" value="P:defense response to virus"/>
    <property type="evidence" value="ECO:0007669"/>
    <property type="project" value="UniProtKB-KW"/>
</dbReference>
<dbReference type="GO" id="GO:0035556">
    <property type="term" value="P:intracellular signal transduction"/>
    <property type="evidence" value="ECO:0007669"/>
    <property type="project" value="InterPro"/>
</dbReference>
<dbReference type="Gene3D" id="3.30.70.1230">
    <property type="entry name" value="Nucleotide cyclase"/>
    <property type="match status" value="2"/>
</dbReference>
<dbReference type="InterPro" id="IPR001054">
    <property type="entry name" value="A/G_cyclase"/>
</dbReference>
<dbReference type="InterPro" id="IPR029787">
    <property type="entry name" value="Nucleotide_cyclase"/>
</dbReference>
<dbReference type="SUPFAM" id="SSF55073">
    <property type="entry name" value="Nucleotide cyclase"/>
    <property type="match status" value="2"/>
</dbReference>
<dbReference type="PROSITE" id="PS50125">
    <property type="entry name" value="GUANYLATE_CYCLASE_2"/>
    <property type="match status" value="2"/>
</dbReference>
<feature type="chain" id="PRO_0000455226" description="Uridylate cyclase">
    <location>
        <begin position="1"/>
        <end position="523"/>
    </location>
</feature>
<feature type="domain" description="Guanylate cyclase 1" evidence="3">
    <location>
        <begin position="69"/>
        <end position="209"/>
    </location>
</feature>
<feature type="domain" description="Guanylate cyclase 2" evidence="3">
    <location>
        <begin position="318"/>
        <end position="438"/>
    </location>
</feature>
<feature type="binding site" evidence="2 8">
    <location>
        <position position="72"/>
    </location>
    <ligand>
        <name>a ribonucleoside 5'-triphosphate</name>
        <dbReference type="ChEBI" id="CHEBI:61557"/>
    </ligand>
</feature>
<feature type="binding site" evidence="2 8">
    <location>
        <position position="125"/>
    </location>
    <ligand>
        <name>a ribonucleoside 5'-triphosphate</name>
        <dbReference type="ChEBI" id="CHEBI:61557"/>
    </ligand>
</feature>
<feature type="binding site" evidence="8">
    <location>
        <position position="323"/>
    </location>
    <ligand>
        <name>Mn(2+)</name>
        <dbReference type="ChEBI" id="CHEBI:29035"/>
        <label>1</label>
    </ligand>
</feature>
<feature type="binding site" evidence="8">
    <location>
        <position position="323"/>
    </location>
    <ligand>
        <name>Mn(2+)</name>
        <dbReference type="ChEBI" id="CHEBI:29035"/>
        <label>2</label>
    </ligand>
</feature>
<feature type="binding site" evidence="8">
    <location>
        <position position="324"/>
    </location>
    <ligand>
        <name>Mn(2+)</name>
        <dbReference type="ChEBI" id="CHEBI:29035"/>
        <label>2</label>
    </ligand>
</feature>
<feature type="binding site" evidence="8">
    <location>
        <position position="372"/>
    </location>
    <ligand>
        <name>Mn(2+)</name>
        <dbReference type="ChEBI" id="CHEBI:29035"/>
        <label>1</label>
    </ligand>
</feature>
<feature type="binding site" evidence="8">
    <location>
        <position position="372"/>
    </location>
    <ligand>
        <name>Mn(2+)</name>
        <dbReference type="ChEBI" id="CHEBI:29035"/>
        <label>2</label>
    </ligand>
</feature>
<accession>A0A4R2TZQ0</accession>
<sequence>MSWSRHKSLQRIRSFRASAPAAAINLSNFDLSYMTARATTIQARRKAGGKSEPLIFDVPPDSAVLVEGVHVYIQLLDFASAMTERERETEASHRRVLSMLHLNYAACDQVAEEFEAQRVDFHGARMHAVIVSPPGPGNERDRAERALAFADAAKRAIEEVGRTTENGRYSTRVRVGIDSGSAVAVNSGTQDEREPLFLGAPANYAAKLAEGDEEGVFMSNRIRKDLGLPQLSSFDTLAAERASRTSSVGETGLSANTSFQSKRLSDAAIMTAASRARNSFILNVGTDANFSFHRHTPPLSTIDFALLTPSNSVRMGLMSIFGDIDGFTKYVDECIAAQRIGEMVSNLHVIRSELAATLSQDFLGRKVRFIGDCIHGLLATGTSYETDASGSVVASVKAAGGMRSSFELCQEELGGIENLGIAIGLEYGETPITRIGIRGDRSVRCSVSRAVSRSEELQGGCTGDQTALGPTALGHAPTSIRRLFAGGVAMGLDAGSVDEHLGSPPIVRSGEVSAAAAPYDSGE</sequence>
<reference key="1">
    <citation type="submission" date="2019-03" db="EMBL/GenBank/DDBJ databases">
        <title>Genomic Encyclopedia of Type Strains, Phase IV (KMG-V): Genome sequencing to study the core and pangenomes of soil and plant-associated prokaryotes.</title>
        <authorList>
            <person name="Whitman W."/>
        </authorList>
    </citation>
    <scope>NUCLEOTIDE SEQUENCE [LARGE SCALE GENOMIC DNA]</scope>
    <source>
        <strain>PP-F2F-G36</strain>
    </source>
</reference>
<reference key="2">
    <citation type="journal article" date="2021" name="Cell">
        <title>Cyclic CMP and cyclic UMP mediate bacterial immunity against phages.</title>
        <authorList>
            <person name="Tal N."/>
            <person name="Morehouse B.R."/>
            <person name="Millman A."/>
            <person name="Stokar-Avihail A."/>
            <person name="Avraham C."/>
            <person name="Fedorenko T."/>
            <person name="Yirmiya E."/>
            <person name="Herbst E."/>
            <person name="Brandis A."/>
            <person name="Mehlman T."/>
            <person name="Oppenheimer-Shaanan Y."/>
            <person name="Keszei A.F.A."/>
            <person name="Shao S."/>
            <person name="Amitai G."/>
            <person name="Kranzusch P.J."/>
            <person name="Sorek R."/>
        </authorList>
    </citation>
    <scope>FUNCTION</scope>
    <scope>CATALYTIC ACTIVITY</scope>
    <scope>CLASSIFICATION</scope>
    <source>
        <strain>PP-F2F-G36</strain>
    </source>
</reference>
<evidence type="ECO:0000250" key="1">
    <source>
        <dbReference type="UniProtKB" id="P0DV24"/>
    </source>
</evidence>
<evidence type="ECO:0000250" key="2">
    <source>
        <dbReference type="UniProtKB" id="P0DV40"/>
    </source>
</evidence>
<evidence type="ECO:0000255" key="3">
    <source>
        <dbReference type="PROSITE-ProRule" id="PRU00099"/>
    </source>
</evidence>
<evidence type="ECO:0000269" key="4">
    <source>
    </source>
</evidence>
<evidence type="ECO:0000303" key="5">
    <source>
    </source>
</evidence>
<evidence type="ECO:0000303" key="6">
    <source ref="1"/>
</evidence>
<evidence type="ECO:0000305" key="7"/>
<evidence type="ECO:0000305" key="8">
    <source>
    </source>
</evidence>
<name>PYCC_RHIS2</name>
<organism>
    <name type="scientific">Rhizobium sp. (strain PP-F2F-G36)</name>
    <dbReference type="NCBI Taxonomy" id="2135649"/>
    <lineage>
        <taxon>Bacteria</taxon>
        <taxon>Pseudomonadati</taxon>
        <taxon>Pseudomonadota</taxon>
        <taxon>Alphaproteobacteria</taxon>
        <taxon>Hyphomicrobiales</taxon>
        <taxon>Rhizobiaceae</taxon>
        <taxon>Rhizobium/Agrobacterium group</taxon>
        <taxon>Rhizobium</taxon>
    </lineage>
</organism>
<gene>
    <name evidence="5" type="primary">pycC</name>
    <name evidence="6" type="ORF">C8J34_10224</name>
</gene>